<keyword id="KW-0028">Amino-acid biosynthesis</keyword>
<keyword id="KW-0055">Arginine biosynthesis</keyword>
<keyword id="KW-0963">Cytoplasm</keyword>
<keyword id="KW-0238">DNA-binding</keyword>
<keyword id="KW-0678">Repressor</keyword>
<keyword id="KW-0804">Transcription</keyword>
<keyword id="KW-0805">Transcription regulation</keyword>
<organism>
    <name type="scientific">Staphylococcus aureus (strain JH9)</name>
    <dbReference type="NCBI Taxonomy" id="359786"/>
    <lineage>
        <taxon>Bacteria</taxon>
        <taxon>Bacillati</taxon>
        <taxon>Bacillota</taxon>
        <taxon>Bacilli</taxon>
        <taxon>Bacillales</taxon>
        <taxon>Staphylococcaceae</taxon>
        <taxon>Staphylococcus</taxon>
    </lineage>
</organism>
<feature type="chain" id="PRO_1000077137" description="Arginine repressor">
    <location>
        <begin position="1"/>
        <end position="150"/>
    </location>
</feature>
<protein>
    <recommendedName>
        <fullName evidence="1">Arginine repressor</fullName>
    </recommendedName>
</protein>
<proteinExistence type="inferred from homology"/>
<reference key="1">
    <citation type="submission" date="2007-05" db="EMBL/GenBank/DDBJ databases">
        <title>Complete sequence of chromosome of Staphylococcus aureus subsp. aureus JH9.</title>
        <authorList>
            <consortium name="US DOE Joint Genome Institute"/>
            <person name="Copeland A."/>
            <person name="Lucas S."/>
            <person name="Lapidus A."/>
            <person name="Barry K."/>
            <person name="Detter J.C."/>
            <person name="Glavina del Rio T."/>
            <person name="Hammon N."/>
            <person name="Israni S."/>
            <person name="Pitluck S."/>
            <person name="Chain P."/>
            <person name="Malfatti S."/>
            <person name="Shin M."/>
            <person name="Vergez L."/>
            <person name="Schmutz J."/>
            <person name="Larimer F."/>
            <person name="Land M."/>
            <person name="Hauser L."/>
            <person name="Kyrpides N."/>
            <person name="Kim E."/>
            <person name="Tomasz A."/>
            <person name="Richardson P."/>
        </authorList>
    </citation>
    <scope>NUCLEOTIDE SEQUENCE [LARGE SCALE GENOMIC DNA]</scope>
    <source>
        <strain>JH9</strain>
    </source>
</reference>
<name>ARGR_STAA9</name>
<dbReference type="EMBL" id="CP000703">
    <property type="protein sequence ID" value="ABQ49372.1"/>
    <property type="molecule type" value="Genomic_DNA"/>
</dbReference>
<dbReference type="RefSeq" id="WP_001124985.1">
    <property type="nucleotide sequence ID" value="NC_009487.1"/>
</dbReference>
<dbReference type="SMR" id="A5IT49"/>
<dbReference type="GeneID" id="98345891"/>
<dbReference type="KEGG" id="saj:SaurJH9_1579"/>
<dbReference type="HOGENOM" id="CLU_097103_3_0_9"/>
<dbReference type="UniPathway" id="UPA00068"/>
<dbReference type="GO" id="GO:0005737">
    <property type="term" value="C:cytoplasm"/>
    <property type="evidence" value="ECO:0007669"/>
    <property type="project" value="UniProtKB-SubCell"/>
</dbReference>
<dbReference type="GO" id="GO:0034618">
    <property type="term" value="F:arginine binding"/>
    <property type="evidence" value="ECO:0007669"/>
    <property type="project" value="InterPro"/>
</dbReference>
<dbReference type="GO" id="GO:0003677">
    <property type="term" value="F:DNA binding"/>
    <property type="evidence" value="ECO:0007669"/>
    <property type="project" value="UniProtKB-KW"/>
</dbReference>
<dbReference type="GO" id="GO:0003700">
    <property type="term" value="F:DNA-binding transcription factor activity"/>
    <property type="evidence" value="ECO:0007669"/>
    <property type="project" value="UniProtKB-UniRule"/>
</dbReference>
<dbReference type="GO" id="GO:0006526">
    <property type="term" value="P:L-arginine biosynthetic process"/>
    <property type="evidence" value="ECO:0007669"/>
    <property type="project" value="UniProtKB-UniPathway"/>
</dbReference>
<dbReference type="GO" id="GO:0051259">
    <property type="term" value="P:protein complex oligomerization"/>
    <property type="evidence" value="ECO:0007669"/>
    <property type="project" value="InterPro"/>
</dbReference>
<dbReference type="GO" id="GO:1900079">
    <property type="term" value="P:regulation of arginine biosynthetic process"/>
    <property type="evidence" value="ECO:0007669"/>
    <property type="project" value="UniProtKB-UniRule"/>
</dbReference>
<dbReference type="Gene3D" id="3.30.1360.40">
    <property type="match status" value="1"/>
</dbReference>
<dbReference type="Gene3D" id="1.10.10.10">
    <property type="entry name" value="Winged helix-like DNA-binding domain superfamily/Winged helix DNA-binding domain"/>
    <property type="match status" value="1"/>
</dbReference>
<dbReference type="HAMAP" id="MF_00173">
    <property type="entry name" value="Arg_repressor"/>
    <property type="match status" value="1"/>
</dbReference>
<dbReference type="InterPro" id="IPR001669">
    <property type="entry name" value="Arg_repress"/>
</dbReference>
<dbReference type="InterPro" id="IPR020899">
    <property type="entry name" value="Arg_repress_C"/>
</dbReference>
<dbReference type="InterPro" id="IPR036251">
    <property type="entry name" value="Arg_repress_C_sf"/>
</dbReference>
<dbReference type="InterPro" id="IPR020900">
    <property type="entry name" value="Arg_repress_DNA-bd"/>
</dbReference>
<dbReference type="InterPro" id="IPR036388">
    <property type="entry name" value="WH-like_DNA-bd_sf"/>
</dbReference>
<dbReference type="InterPro" id="IPR036390">
    <property type="entry name" value="WH_DNA-bd_sf"/>
</dbReference>
<dbReference type="NCBIfam" id="TIGR01529">
    <property type="entry name" value="argR_whole"/>
    <property type="match status" value="1"/>
</dbReference>
<dbReference type="NCBIfam" id="NF003281">
    <property type="entry name" value="PRK04280.1"/>
    <property type="match status" value="1"/>
</dbReference>
<dbReference type="PANTHER" id="PTHR34471">
    <property type="entry name" value="ARGININE REPRESSOR"/>
    <property type="match status" value="1"/>
</dbReference>
<dbReference type="PANTHER" id="PTHR34471:SF1">
    <property type="entry name" value="ARGININE REPRESSOR"/>
    <property type="match status" value="1"/>
</dbReference>
<dbReference type="Pfam" id="PF01316">
    <property type="entry name" value="Arg_repressor"/>
    <property type="match status" value="1"/>
</dbReference>
<dbReference type="Pfam" id="PF02863">
    <property type="entry name" value="Arg_repressor_C"/>
    <property type="match status" value="1"/>
</dbReference>
<dbReference type="PRINTS" id="PR01467">
    <property type="entry name" value="ARGREPRESSOR"/>
</dbReference>
<dbReference type="SUPFAM" id="SSF55252">
    <property type="entry name" value="C-terminal domain of arginine repressor"/>
    <property type="match status" value="1"/>
</dbReference>
<dbReference type="SUPFAM" id="SSF46785">
    <property type="entry name" value="Winged helix' DNA-binding domain"/>
    <property type="match status" value="1"/>
</dbReference>
<sequence>MPKKSVRHIKIREIISNEQIETQDELVKRLNDYDLNVTQATVSRDIKELQLIKVPIPSGQYVYSLPNDRKFHPLEKLGRYLMDSFVNIDGTDNLLVLKTLPGNAQSIGAILDQINWEEVLGTICGDDTCLIICRSKEASDEIKSRIFNLL</sequence>
<accession>A5IT49</accession>
<comment type="function">
    <text evidence="1">Regulates arginine biosynthesis genes.</text>
</comment>
<comment type="pathway">
    <text>Amino-acid biosynthesis; L-arginine biosynthesis [regulation].</text>
</comment>
<comment type="subcellular location">
    <subcellularLocation>
        <location evidence="1">Cytoplasm</location>
    </subcellularLocation>
</comment>
<comment type="similarity">
    <text evidence="1">Belongs to the ArgR family.</text>
</comment>
<evidence type="ECO:0000255" key="1">
    <source>
        <dbReference type="HAMAP-Rule" id="MF_00173"/>
    </source>
</evidence>
<gene>
    <name evidence="1" type="primary">argR</name>
    <name type="ordered locus">SaurJH9_1579</name>
</gene>